<proteinExistence type="inferred from homology"/>
<dbReference type="EC" id="4.2.1.2" evidence="1"/>
<dbReference type="EMBL" id="BX548175">
    <property type="protein sequence ID" value="CAE21660.1"/>
    <property type="molecule type" value="Genomic_DNA"/>
</dbReference>
<dbReference type="SMR" id="Q7V5R2"/>
<dbReference type="KEGG" id="pmt:PMT_1485"/>
<dbReference type="eggNOG" id="COG0114">
    <property type="taxonomic scope" value="Bacteria"/>
</dbReference>
<dbReference type="HOGENOM" id="CLU_021594_4_1_3"/>
<dbReference type="UniPathway" id="UPA00223">
    <property type="reaction ID" value="UER01007"/>
</dbReference>
<dbReference type="Proteomes" id="UP000001423">
    <property type="component" value="Chromosome"/>
</dbReference>
<dbReference type="GO" id="GO:0005737">
    <property type="term" value="C:cytoplasm"/>
    <property type="evidence" value="ECO:0007669"/>
    <property type="project" value="UniProtKB-SubCell"/>
</dbReference>
<dbReference type="GO" id="GO:0004333">
    <property type="term" value="F:fumarate hydratase activity"/>
    <property type="evidence" value="ECO:0007669"/>
    <property type="project" value="UniProtKB-UniRule"/>
</dbReference>
<dbReference type="GO" id="GO:0006106">
    <property type="term" value="P:fumarate metabolic process"/>
    <property type="evidence" value="ECO:0007669"/>
    <property type="project" value="InterPro"/>
</dbReference>
<dbReference type="GO" id="GO:0006108">
    <property type="term" value="P:malate metabolic process"/>
    <property type="evidence" value="ECO:0007669"/>
    <property type="project" value="TreeGrafter"/>
</dbReference>
<dbReference type="GO" id="GO:0006099">
    <property type="term" value="P:tricarboxylic acid cycle"/>
    <property type="evidence" value="ECO:0007669"/>
    <property type="project" value="UniProtKB-UniRule"/>
</dbReference>
<dbReference type="CDD" id="cd01362">
    <property type="entry name" value="Fumarase_classII"/>
    <property type="match status" value="1"/>
</dbReference>
<dbReference type="FunFam" id="1.10.40.30:FF:000002">
    <property type="entry name" value="Fumarate hydratase class II"/>
    <property type="match status" value="1"/>
</dbReference>
<dbReference type="FunFam" id="1.10.275.10:FF:000001">
    <property type="entry name" value="Fumarate hydratase, mitochondrial"/>
    <property type="match status" value="1"/>
</dbReference>
<dbReference type="FunFam" id="1.20.200.10:FF:000001">
    <property type="entry name" value="Fumarate hydratase, mitochondrial"/>
    <property type="match status" value="1"/>
</dbReference>
<dbReference type="Gene3D" id="1.10.40.30">
    <property type="entry name" value="Fumarase/aspartase (C-terminal domain)"/>
    <property type="match status" value="1"/>
</dbReference>
<dbReference type="Gene3D" id="1.20.200.10">
    <property type="entry name" value="Fumarase/aspartase (Central domain)"/>
    <property type="match status" value="1"/>
</dbReference>
<dbReference type="Gene3D" id="1.10.275.10">
    <property type="entry name" value="Fumarase/aspartase (N-terminal domain)"/>
    <property type="match status" value="1"/>
</dbReference>
<dbReference type="HAMAP" id="MF_00743">
    <property type="entry name" value="FumaraseC"/>
    <property type="match status" value="1"/>
</dbReference>
<dbReference type="InterPro" id="IPR005677">
    <property type="entry name" value="Fum_hydII"/>
</dbReference>
<dbReference type="InterPro" id="IPR024083">
    <property type="entry name" value="Fumarase/histidase_N"/>
</dbReference>
<dbReference type="InterPro" id="IPR018951">
    <property type="entry name" value="Fumarase_C_C"/>
</dbReference>
<dbReference type="InterPro" id="IPR020557">
    <property type="entry name" value="Fumarate_lyase_CS"/>
</dbReference>
<dbReference type="InterPro" id="IPR000362">
    <property type="entry name" value="Fumarate_lyase_fam"/>
</dbReference>
<dbReference type="InterPro" id="IPR022761">
    <property type="entry name" value="Fumarate_lyase_N"/>
</dbReference>
<dbReference type="InterPro" id="IPR008948">
    <property type="entry name" value="L-Aspartase-like"/>
</dbReference>
<dbReference type="NCBIfam" id="TIGR00979">
    <property type="entry name" value="fumC_II"/>
    <property type="match status" value="1"/>
</dbReference>
<dbReference type="NCBIfam" id="NF008909">
    <property type="entry name" value="PRK12273.1"/>
    <property type="match status" value="1"/>
</dbReference>
<dbReference type="PANTHER" id="PTHR11444">
    <property type="entry name" value="ASPARTATEAMMONIA/ARGININOSUCCINATE/ADENYLOSUCCINATE LYASE"/>
    <property type="match status" value="1"/>
</dbReference>
<dbReference type="PANTHER" id="PTHR11444:SF1">
    <property type="entry name" value="FUMARATE HYDRATASE, MITOCHONDRIAL"/>
    <property type="match status" value="1"/>
</dbReference>
<dbReference type="Pfam" id="PF10415">
    <property type="entry name" value="FumaraseC_C"/>
    <property type="match status" value="1"/>
</dbReference>
<dbReference type="Pfam" id="PF00206">
    <property type="entry name" value="Lyase_1"/>
    <property type="match status" value="1"/>
</dbReference>
<dbReference type="PRINTS" id="PR00149">
    <property type="entry name" value="FUMRATELYASE"/>
</dbReference>
<dbReference type="SUPFAM" id="SSF48557">
    <property type="entry name" value="L-aspartase-like"/>
    <property type="match status" value="1"/>
</dbReference>
<dbReference type="PROSITE" id="PS00163">
    <property type="entry name" value="FUMARATE_LYASES"/>
    <property type="match status" value="1"/>
</dbReference>
<organism>
    <name type="scientific">Prochlorococcus marinus (strain MIT 9313)</name>
    <dbReference type="NCBI Taxonomy" id="74547"/>
    <lineage>
        <taxon>Bacteria</taxon>
        <taxon>Bacillati</taxon>
        <taxon>Cyanobacteriota</taxon>
        <taxon>Cyanophyceae</taxon>
        <taxon>Synechococcales</taxon>
        <taxon>Prochlorococcaceae</taxon>
        <taxon>Prochlorococcus</taxon>
    </lineage>
</organism>
<evidence type="ECO:0000255" key="1">
    <source>
        <dbReference type="HAMAP-Rule" id="MF_00743"/>
    </source>
</evidence>
<comment type="function">
    <text evidence="1">Involved in the TCA cycle. Catalyzes the stereospecific interconversion of fumarate to L-malate.</text>
</comment>
<comment type="catalytic activity">
    <reaction evidence="1">
        <text>(S)-malate = fumarate + H2O</text>
        <dbReference type="Rhea" id="RHEA:12460"/>
        <dbReference type="ChEBI" id="CHEBI:15377"/>
        <dbReference type="ChEBI" id="CHEBI:15589"/>
        <dbReference type="ChEBI" id="CHEBI:29806"/>
        <dbReference type="EC" id="4.2.1.2"/>
    </reaction>
</comment>
<comment type="pathway">
    <text evidence="1">Carbohydrate metabolism; tricarboxylic acid cycle; (S)-malate from fumarate: step 1/1.</text>
</comment>
<comment type="subunit">
    <text evidence="1">Homotetramer.</text>
</comment>
<comment type="subcellular location">
    <subcellularLocation>
        <location evidence="1">Cytoplasm</location>
    </subcellularLocation>
</comment>
<comment type="miscellaneous">
    <text evidence="1">There are 2 substrate-binding sites: the catalytic A site, and the non-catalytic B site that may play a role in the transfer of substrate or product between the active site and the solvent. Alternatively, the B site may bind allosteric effectors.</text>
</comment>
<comment type="similarity">
    <text evidence="1">Belongs to the class-II fumarase/aspartase family. Fumarase subfamily.</text>
</comment>
<reference key="1">
    <citation type="journal article" date="2003" name="Nature">
        <title>Genome divergence in two Prochlorococcus ecotypes reflects oceanic niche differentiation.</title>
        <authorList>
            <person name="Rocap G."/>
            <person name="Larimer F.W."/>
            <person name="Lamerdin J.E."/>
            <person name="Malfatti S."/>
            <person name="Chain P."/>
            <person name="Ahlgren N.A."/>
            <person name="Arellano A."/>
            <person name="Coleman M."/>
            <person name="Hauser L."/>
            <person name="Hess W.R."/>
            <person name="Johnson Z.I."/>
            <person name="Land M.L."/>
            <person name="Lindell D."/>
            <person name="Post A.F."/>
            <person name="Regala W."/>
            <person name="Shah M."/>
            <person name="Shaw S.L."/>
            <person name="Steglich C."/>
            <person name="Sullivan M.B."/>
            <person name="Ting C.S."/>
            <person name="Tolonen A."/>
            <person name="Webb E.A."/>
            <person name="Zinser E.R."/>
            <person name="Chisholm S.W."/>
        </authorList>
    </citation>
    <scope>NUCLEOTIDE SEQUENCE [LARGE SCALE GENOMIC DNA]</scope>
    <source>
        <strain>MIT 9313</strain>
    </source>
</reference>
<keyword id="KW-0963">Cytoplasm</keyword>
<keyword id="KW-0456">Lyase</keyword>
<keyword id="KW-1185">Reference proteome</keyword>
<keyword id="KW-0816">Tricarboxylic acid cycle</keyword>
<gene>
    <name evidence="1" type="primary">fumC</name>
    <name type="ordered locus">PMT_1485</name>
</gene>
<sequence length="466" mass="50233">MMADLMRIEHDSMGTIEVPAGVLWGAQTQRSLLNFAISTDRMPVELIHALALIKQAAASVNCRLGVLDEVQRDQIIKAASAVASGLHDDQFPLRVWQTGSGTHTNMNVNEVISNLASQANDEPLGSHRPVHPNDHVNRSQSTNDAFPTAIHIAAVQGITNNLLPELEQLIAAFARKSDAWSDIIKIGRTHLQDAVPLTLGQEASAWRDQIASAHSRIQSSLIELYPLPLGGTAVGTGLNAPARFGQETAAQLASITGLPFSSAKNKFAVMASHDGLVNAMAQLRMLAVALFKISNDLRLLACGPRAGLAELHLPENEPGSSIMPGKVNPSQCEAMAMVCLQVIGLDSAVTMAGGSGHLQMNVYKPLIGFNLLHSIELLHDACRKYRLAMVQGIEPNRIKIQHDLEQSLMLVTALAPEIGYDKASEIAHLAHEKGFSLREAALKLGYVSKEDFDRIVNPALMTSARL</sequence>
<name>FUMC_PROMM</name>
<accession>Q7V5R2</accession>
<protein>
    <recommendedName>
        <fullName evidence="1">Fumarate hydratase class II</fullName>
        <shortName evidence="1">Fumarase C</shortName>
        <ecNumber evidence="1">4.2.1.2</ecNumber>
    </recommendedName>
    <alternativeName>
        <fullName evidence="1">Aerobic fumarase</fullName>
    </alternativeName>
    <alternativeName>
        <fullName evidence="1">Iron-independent fumarase</fullName>
    </alternativeName>
</protein>
<feature type="chain" id="PRO_0000161297" description="Fumarate hydratase class II">
    <location>
        <begin position="1"/>
        <end position="466"/>
    </location>
</feature>
<feature type="active site" description="Proton donor/acceptor" evidence="1">
    <location>
        <position position="190"/>
    </location>
</feature>
<feature type="active site" evidence="1">
    <location>
        <position position="320"/>
    </location>
</feature>
<feature type="binding site" evidence="1">
    <location>
        <begin position="100"/>
        <end position="102"/>
    </location>
    <ligand>
        <name>substrate</name>
    </ligand>
</feature>
<feature type="binding site" evidence="1">
    <location>
        <position position="128"/>
    </location>
    <ligand>
        <name>substrate</name>
    </ligand>
</feature>
<feature type="binding site" description="in site B" evidence="1">
    <location>
        <begin position="131"/>
        <end position="134"/>
    </location>
    <ligand>
        <name>substrate</name>
    </ligand>
</feature>
<feature type="binding site" evidence="1">
    <location>
        <begin position="141"/>
        <end position="143"/>
    </location>
    <ligand>
        <name>substrate</name>
    </ligand>
</feature>
<feature type="binding site" evidence="1">
    <location>
        <position position="189"/>
    </location>
    <ligand>
        <name>substrate</name>
    </ligand>
</feature>
<feature type="binding site" evidence="1">
    <location>
        <position position="321"/>
    </location>
    <ligand>
        <name>substrate</name>
    </ligand>
</feature>
<feature type="binding site" evidence="1">
    <location>
        <begin position="326"/>
        <end position="328"/>
    </location>
    <ligand>
        <name>substrate</name>
    </ligand>
</feature>
<feature type="site" description="Important for catalytic activity" evidence="1">
    <location>
        <position position="333"/>
    </location>
</feature>